<gene>
    <name evidence="4" type="primary">Tcp11l2</name>
</gene>
<feature type="chain" id="PRO_0000313752" description="T-complex protein 11-like protein 2">
    <location>
        <begin position="1"/>
        <end position="517"/>
    </location>
</feature>
<feature type="region of interest" description="Disordered" evidence="2">
    <location>
        <begin position="1"/>
        <end position="59"/>
    </location>
</feature>
<feature type="compositionally biased region" description="Low complexity" evidence="2">
    <location>
        <begin position="17"/>
        <end position="55"/>
    </location>
</feature>
<feature type="modified residue" description="Phosphoserine" evidence="5">
    <location>
        <position position="16"/>
    </location>
</feature>
<protein>
    <recommendedName>
        <fullName evidence="3">T-complex protein 11-like protein 2</fullName>
    </recommendedName>
</protein>
<organism>
    <name type="scientific">Rattus norvegicus</name>
    <name type="common">Rat</name>
    <dbReference type="NCBI Taxonomy" id="10116"/>
    <lineage>
        <taxon>Eukaryota</taxon>
        <taxon>Metazoa</taxon>
        <taxon>Chordata</taxon>
        <taxon>Craniata</taxon>
        <taxon>Vertebrata</taxon>
        <taxon>Euteleostomi</taxon>
        <taxon>Mammalia</taxon>
        <taxon>Eutheria</taxon>
        <taxon>Euarchontoglires</taxon>
        <taxon>Glires</taxon>
        <taxon>Rodentia</taxon>
        <taxon>Myomorpha</taxon>
        <taxon>Muroidea</taxon>
        <taxon>Muridae</taxon>
        <taxon>Murinae</taxon>
        <taxon>Rattus</taxon>
    </lineage>
</organism>
<dbReference type="EMBL" id="BC092644">
    <property type="protein sequence ID" value="AAH92644.1"/>
    <property type="molecule type" value="mRNA"/>
</dbReference>
<dbReference type="RefSeq" id="NP_001017458.1">
    <property type="nucleotide sequence ID" value="NM_001017458.1"/>
</dbReference>
<dbReference type="RefSeq" id="XP_006241236.1">
    <property type="nucleotide sequence ID" value="XM_006241174.5"/>
</dbReference>
<dbReference type="RefSeq" id="XP_038934962.1">
    <property type="nucleotide sequence ID" value="XM_039079034.2"/>
</dbReference>
<dbReference type="FunCoup" id="Q568Z0">
    <property type="interactions" value="1002"/>
</dbReference>
<dbReference type="STRING" id="10116.ENSRNOP00000010024"/>
<dbReference type="iPTMnet" id="Q568Z0"/>
<dbReference type="PhosphoSitePlus" id="Q568Z0"/>
<dbReference type="PaxDb" id="10116-ENSRNOP00000010024"/>
<dbReference type="Ensembl" id="ENSRNOT00000010024.7">
    <property type="protein sequence ID" value="ENSRNOP00000010024.4"/>
    <property type="gene ID" value="ENSRNOG00000007587.7"/>
</dbReference>
<dbReference type="GeneID" id="314683"/>
<dbReference type="KEGG" id="rno:314683"/>
<dbReference type="UCSC" id="RGD:1307494">
    <property type="organism name" value="rat"/>
</dbReference>
<dbReference type="AGR" id="RGD:1307494"/>
<dbReference type="CTD" id="255394"/>
<dbReference type="RGD" id="1307494">
    <property type="gene designation" value="Tcp11l2"/>
</dbReference>
<dbReference type="eggNOG" id="KOG1981">
    <property type="taxonomic scope" value="Eukaryota"/>
</dbReference>
<dbReference type="GeneTree" id="ENSGT00940000157835"/>
<dbReference type="HOGENOM" id="CLU_026469_0_0_1"/>
<dbReference type="InParanoid" id="Q568Z0"/>
<dbReference type="OMA" id="YVINTMG"/>
<dbReference type="OrthoDB" id="276323at2759"/>
<dbReference type="PhylomeDB" id="Q568Z0"/>
<dbReference type="TreeFam" id="TF313385"/>
<dbReference type="PRO" id="PR:Q568Z0"/>
<dbReference type="Proteomes" id="UP000002494">
    <property type="component" value="Chromosome 7"/>
</dbReference>
<dbReference type="Bgee" id="ENSRNOG00000007587">
    <property type="expression patterns" value="Expressed in heart and 20 other cell types or tissues"/>
</dbReference>
<dbReference type="GO" id="GO:0005737">
    <property type="term" value="C:cytoplasm"/>
    <property type="evidence" value="ECO:0000250"/>
    <property type="project" value="UniProtKB"/>
</dbReference>
<dbReference type="GO" id="GO:0005856">
    <property type="term" value="C:cytoskeleton"/>
    <property type="evidence" value="ECO:0007669"/>
    <property type="project" value="UniProtKB-SubCell"/>
</dbReference>
<dbReference type="GO" id="GO:0014812">
    <property type="term" value="P:muscle cell migration"/>
    <property type="evidence" value="ECO:0000250"/>
    <property type="project" value="UniProtKB"/>
</dbReference>
<dbReference type="GO" id="GO:0007165">
    <property type="term" value="P:signal transduction"/>
    <property type="evidence" value="ECO:0000318"/>
    <property type="project" value="GO_Central"/>
</dbReference>
<dbReference type="InterPro" id="IPR008862">
    <property type="entry name" value="Tcp11"/>
</dbReference>
<dbReference type="PANTHER" id="PTHR12832:SF17">
    <property type="entry name" value="T-COMPLEX PROTEIN 11-LIKE PROTEIN 2"/>
    <property type="match status" value="1"/>
</dbReference>
<dbReference type="PANTHER" id="PTHR12832">
    <property type="entry name" value="TESTIS-SPECIFIC PROTEIN PBS13 T-COMPLEX 11"/>
    <property type="match status" value="1"/>
</dbReference>
<dbReference type="Pfam" id="PF05794">
    <property type="entry name" value="Tcp11"/>
    <property type="match status" value="1"/>
</dbReference>
<name>T11L2_RAT</name>
<reference key="1">
    <citation type="journal article" date="2004" name="Genome Res.">
        <title>The status, quality, and expansion of the NIH full-length cDNA project: the Mammalian Gene Collection (MGC).</title>
        <authorList>
            <consortium name="The MGC Project Team"/>
        </authorList>
    </citation>
    <scope>NUCLEOTIDE SEQUENCE [LARGE SCALE MRNA]</scope>
    <source>
        <tissue>Brain</tissue>
    </source>
</reference>
<reference key="2">
    <citation type="journal article" date="2012" name="Nat. Commun.">
        <title>Quantitative maps of protein phosphorylation sites across 14 different rat organs and tissues.</title>
        <authorList>
            <person name="Lundby A."/>
            <person name="Secher A."/>
            <person name="Lage K."/>
            <person name="Nordsborg N.B."/>
            <person name="Dmytriyev A."/>
            <person name="Lundby C."/>
            <person name="Olsen J.V."/>
        </authorList>
    </citation>
    <scope>PHOSPHORYLATION [LARGE SCALE ANALYSIS] AT SER-16</scope>
    <scope>IDENTIFICATION BY MASS SPECTROMETRY [LARGE SCALE ANALYSIS]</scope>
</reference>
<keyword id="KW-0963">Cytoplasm</keyword>
<keyword id="KW-0206">Cytoskeleton</keyword>
<keyword id="KW-0597">Phosphoprotein</keyword>
<keyword id="KW-1185">Reference proteome</keyword>
<evidence type="ECO:0000250" key="1">
    <source>
        <dbReference type="UniProtKB" id="A7Z033"/>
    </source>
</evidence>
<evidence type="ECO:0000256" key="2">
    <source>
        <dbReference type="SAM" id="MobiDB-lite"/>
    </source>
</evidence>
<evidence type="ECO:0000305" key="3"/>
<evidence type="ECO:0000312" key="4">
    <source>
        <dbReference type="RGD" id="1307494"/>
    </source>
</evidence>
<evidence type="ECO:0007744" key="5">
    <source>
    </source>
</evidence>
<comment type="function">
    <text evidence="1">Promotes the migration of muscle-derived satellite cells (MDSCs) during differentiation throught interaction with FMNL2 and therefore may participate in microfilament assembly.</text>
</comment>
<comment type="subunit">
    <text evidence="1">Interacts with FMNL2; this interaction promotes muscle-derived satellite cell (MDSC) migration and differentiation.</text>
</comment>
<comment type="subcellular location">
    <subcellularLocation>
        <location evidence="1">Cytoplasm</location>
        <location evidence="1">Cytoskeleton</location>
    </subcellularLocation>
    <text evidence="1">Accumulates around the actin complex before the formation of microfilament bundles and microtubule extension.</text>
</comment>
<comment type="similarity">
    <text evidence="3">Belongs to the TCP11 family.</text>
</comment>
<sequence>MPFNGEKQYVNEDQQSDSESSRFSESTASLSDYGCSRQSFTSDSSSKSSSPASTSPPRGIMFDDVMAAAKNLSDMTLAHEIAVNENFQLRPNALPENSLAGQVKRVVHQAFWDVLEADLSAEPPQYEYAIKLFEEIREILLSFLTPGGNRLHSQICEVLDIDLIRQQAEHSAVDIQGLANYVISTMGKICAPVRDEDIRELKATTNIVEMLRQIFRVLDLMRMDMTNFVIRNIRPHIQHHLVEYERNKFQEVLEETPNALSQTTEWLKESIDKELFSETDVAPGAEHSSTPSLSPLTVLNNCYLKLLQWDYQKNVLPETLMTDGPRLQELTEKLNQLKMIACVSLITNNMVGAVTEGLPELANRLKRISAVLLEGMSKQTFNLKEALNSIGVQTCAEVNKALKERGSPTLNAEVQANLVGQFTSLEEKDNPVCALMDKRIQLYMKSLLCLPSTQKSRPPVPGGLDVIQQELEVLGCQYANIVNLNKQVYGPFYANIFRKLLFRDEAMGKIDASLPTN</sequence>
<accession>Q568Z0</accession>
<proteinExistence type="evidence at protein level"/>